<dbReference type="EC" id="3.6.1.69" evidence="4"/>
<dbReference type="EMBL" id="AL123456">
    <property type="protein sequence ID" value="CCP45790.1"/>
    <property type="molecule type" value="Genomic_DNA"/>
</dbReference>
<dbReference type="PIR" id="F70673">
    <property type="entry name" value="F70673"/>
</dbReference>
<dbReference type="RefSeq" id="NP_217501.1">
    <property type="nucleotide sequence ID" value="NC_000962.3"/>
</dbReference>
<dbReference type="RefSeq" id="WP_003899569.1">
    <property type="nucleotide sequence ID" value="NZ_NVQJ01000041.1"/>
</dbReference>
<dbReference type="SMR" id="P9WIY3"/>
<dbReference type="FunCoup" id="P9WIY3">
    <property type="interactions" value="1"/>
</dbReference>
<dbReference type="STRING" id="83332.Rv2985"/>
<dbReference type="PaxDb" id="83332-Rv2985"/>
<dbReference type="DNASU" id="888165"/>
<dbReference type="GeneID" id="888165"/>
<dbReference type="KEGG" id="mtu:Rv2985"/>
<dbReference type="KEGG" id="mtv:RVBD_2985"/>
<dbReference type="TubercuList" id="Rv2985"/>
<dbReference type="eggNOG" id="COG0406">
    <property type="taxonomic scope" value="Bacteria"/>
</dbReference>
<dbReference type="eggNOG" id="COG0494">
    <property type="taxonomic scope" value="Bacteria"/>
</dbReference>
<dbReference type="InParanoid" id="P9WIY3"/>
<dbReference type="OrthoDB" id="4287477at2"/>
<dbReference type="PhylomeDB" id="P9WIY3"/>
<dbReference type="BioCyc" id="MetaCyc:G185E-7240-MONOMER"/>
<dbReference type="BRENDA" id="3.6.1.69">
    <property type="organism ID" value="3445"/>
</dbReference>
<dbReference type="Proteomes" id="UP000001584">
    <property type="component" value="Chromosome"/>
</dbReference>
<dbReference type="GO" id="GO:0008413">
    <property type="term" value="F:8-oxo-7,8-dihydroguanosine triphosphate pyrophosphatase activity"/>
    <property type="evidence" value="ECO:0007669"/>
    <property type="project" value="UniProtKB-EC"/>
</dbReference>
<dbReference type="GO" id="GO:0046872">
    <property type="term" value="F:metal ion binding"/>
    <property type="evidence" value="ECO:0007669"/>
    <property type="project" value="UniProtKB-KW"/>
</dbReference>
<dbReference type="GO" id="GO:0006281">
    <property type="term" value="P:DNA repair"/>
    <property type="evidence" value="ECO:0007669"/>
    <property type="project" value="UniProtKB-KW"/>
</dbReference>
<dbReference type="GO" id="GO:0006260">
    <property type="term" value="P:DNA replication"/>
    <property type="evidence" value="ECO:0007669"/>
    <property type="project" value="UniProtKB-KW"/>
</dbReference>
<dbReference type="CDD" id="cd07067">
    <property type="entry name" value="HP_PGM_like"/>
    <property type="match status" value="1"/>
</dbReference>
<dbReference type="CDD" id="cd03673">
    <property type="entry name" value="NUDIX_Ap6A_hydrolase"/>
    <property type="match status" value="1"/>
</dbReference>
<dbReference type="Gene3D" id="3.90.79.10">
    <property type="entry name" value="Nucleoside Triphosphate Pyrophosphohydrolase"/>
    <property type="match status" value="1"/>
</dbReference>
<dbReference type="Gene3D" id="3.40.50.1240">
    <property type="entry name" value="Phosphoglycerate mutase-like"/>
    <property type="match status" value="1"/>
</dbReference>
<dbReference type="InterPro" id="IPR013078">
    <property type="entry name" value="His_Pase_superF_clade-1"/>
</dbReference>
<dbReference type="InterPro" id="IPR029033">
    <property type="entry name" value="His_PPase_superfam"/>
</dbReference>
<dbReference type="InterPro" id="IPR020476">
    <property type="entry name" value="Nudix_hydrolase"/>
</dbReference>
<dbReference type="InterPro" id="IPR015797">
    <property type="entry name" value="NUDIX_hydrolase-like_dom_sf"/>
</dbReference>
<dbReference type="InterPro" id="IPR020084">
    <property type="entry name" value="NUDIX_hydrolase_CS"/>
</dbReference>
<dbReference type="InterPro" id="IPR000086">
    <property type="entry name" value="NUDIX_hydrolase_dom"/>
</dbReference>
<dbReference type="PANTHER" id="PTHR43222:SF9">
    <property type="entry name" value="8-OXO-(D)GTP PHOSPHATASE"/>
    <property type="match status" value="1"/>
</dbReference>
<dbReference type="PANTHER" id="PTHR43222">
    <property type="entry name" value="NUDIX HYDROLASE 23"/>
    <property type="match status" value="1"/>
</dbReference>
<dbReference type="Pfam" id="PF00300">
    <property type="entry name" value="His_Phos_1"/>
    <property type="match status" value="1"/>
</dbReference>
<dbReference type="Pfam" id="PF00293">
    <property type="entry name" value="NUDIX"/>
    <property type="match status" value="1"/>
</dbReference>
<dbReference type="PRINTS" id="PR00502">
    <property type="entry name" value="NUDIXFAMILY"/>
</dbReference>
<dbReference type="SMART" id="SM00855">
    <property type="entry name" value="PGAM"/>
    <property type="match status" value="1"/>
</dbReference>
<dbReference type="SUPFAM" id="SSF55811">
    <property type="entry name" value="Nudix"/>
    <property type="match status" value="1"/>
</dbReference>
<dbReference type="SUPFAM" id="SSF53254">
    <property type="entry name" value="Phosphoglycerate mutase-like"/>
    <property type="match status" value="1"/>
</dbReference>
<dbReference type="PROSITE" id="PS51462">
    <property type="entry name" value="NUDIX"/>
    <property type="match status" value="1"/>
</dbReference>
<dbReference type="PROSITE" id="PS00893">
    <property type="entry name" value="NUDIX_BOX"/>
    <property type="match status" value="1"/>
</dbReference>
<reference key="1">
    <citation type="journal article" date="1998" name="Nature">
        <title>Deciphering the biology of Mycobacterium tuberculosis from the complete genome sequence.</title>
        <authorList>
            <person name="Cole S.T."/>
            <person name="Brosch R."/>
            <person name="Parkhill J."/>
            <person name="Garnier T."/>
            <person name="Churcher C.M."/>
            <person name="Harris D.E."/>
            <person name="Gordon S.V."/>
            <person name="Eiglmeier K."/>
            <person name="Gas S."/>
            <person name="Barry C.E. III"/>
            <person name="Tekaia F."/>
            <person name="Badcock K."/>
            <person name="Basham D."/>
            <person name="Brown D."/>
            <person name="Chillingworth T."/>
            <person name="Connor R."/>
            <person name="Davies R.M."/>
            <person name="Devlin K."/>
            <person name="Feltwell T."/>
            <person name="Gentles S."/>
            <person name="Hamlin N."/>
            <person name="Holroyd S."/>
            <person name="Hornsby T."/>
            <person name="Jagels K."/>
            <person name="Krogh A."/>
            <person name="McLean J."/>
            <person name="Moule S."/>
            <person name="Murphy L.D."/>
            <person name="Oliver S."/>
            <person name="Osborne J."/>
            <person name="Quail M.A."/>
            <person name="Rajandream M.A."/>
            <person name="Rogers J."/>
            <person name="Rutter S."/>
            <person name="Seeger K."/>
            <person name="Skelton S."/>
            <person name="Squares S."/>
            <person name="Squares R."/>
            <person name="Sulston J.E."/>
            <person name="Taylor K."/>
            <person name="Whitehead S."/>
            <person name="Barrell B.G."/>
        </authorList>
    </citation>
    <scope>NUCLEOTIDE SEQUENCE [LARGE SCALE GENOMIC DNA]</scope>
    <source>
        <strain>ATCC 25618 / H37Rv</strain>
    </source>
</reference>
<reference key="2">
    <citation type="journal article" date="2006" name="J. Bacteriol.">
        <title>Identification of Nudix hydrolase family members with an antimutator role in Mycobacterium tuberculosis and Mycobacterium smegmatis.</title>
        <authorList>
            <person name="Dos Vultos T."/>
            <person name="Blazquez J."/>
            <person name="Rauzier J."/>
            <person name="Matic I."/>
            <person name="Gicquel B."/>
        </authorList>
    </citation>
    <scope>FUNCTION</scope>
    <scope>DISRUPTION PHENOTYPE</scope>
    <source>
        <strain>ATCC 25618 / H37Rv</strain>
    </source>
</reference>
<reference key="3">
    <citation type="journal article" date="2011" name="Mol. Cell. Proteomics">
        <title>Proteogenomic analysis of Mycobacterium tuberculosis by high resolution mass spectrometry.</title>
        <authorList>
            <person name="Kelkar D.S."/>
            <person name="Kumar D."/>
            <person name="Kumar P."/>
            <person name="Balakrishnan L."/>
            <person name="Muthusamy B."/>
            <person name="Yadav A.K."/>
            <person name="Shrivastava P."/>
            <person name="Marimuthu A."/>
            <person name="Anand S."/>
            <person name="Sundaram H."/>
            <person name="Kingsbury R."/>
            <person name="Harsha H.C."/>
            <person name="Nair B."/>
            <person name="Prasad T.S."/>
            <person name="Chauhan D.S."/>
            <person name="Katoch K."/>
            <person name="Katoch V.M."/>
            <person name="Kumar P."/>
            <person name="Chaerkady R."/>
            <person name="Ramachandran S."/>
            <person name="Dash D."/>
            <person name="Pandey A."/>
        </authorList>
    </citation>
    <scope>IDENTIFICATION BY MASS SPECTROMETRY [LARGE SCALE ANALYSIS]</scope>
    <source>
        <strain>ATCC 25618 / H37Rv</strain>
    </source>
</reference>
<reference key="4">
    <citation type="journal article" date="2013" name="J. Biol. Chem.">
        <title>Mycobacterium tuberculosis MutT1 (Rv2985) and ADPRase (Rv1700) proteins constitute a two-stage mechanism of 8-oxo-dGTP and 8-oxo-GTP detoxification and adenosine to cytidine mutation avoidance.</title>
        <authorList>
            <person name="Patil A.G."/>
            <person name="Sang P.B."/>
            <person name="Govindan A."/>
            <person name="Varshney U."/>
        </authorList>
    </citation>
    <scope>FUNCTION</scope>
    <scope>CATALYTIC ACTIVITY</scope>
    <scope>BIOPHYSICOCHEMICAL PROPERTIES</scope>
    <source>
        <strain>H37Rv</strain>
    </source>
</reference>
<sequence length="317" mass="34780">MSIQNSSARRRSAGRIVYAAGAVLWRPGSADSEGPVEIAVIHRPRYDDWSLPKGKVDPGETAPVGAVREILEETGHRANLGRRLLTVTYPTDSPFRGVKKVHYWAARSTGGEFTPGSEVDELIWLPVPDAMNKLDYAQDRKVLCRFAKHPADTQTVLVVRHGTAGSKAHFSGDDSKRPLDKRGRAQAEALVPQLLAFGATDVYAADRVRCHQTMEPLAAELNVTIHNEPTLTEESYANNPKRGRHRVLQIVEQVGTPVICTQGKVIPDLITWWCERDGVHPDKSRNRKGSTWVLSLSAGRLVTADHIGGALAANVRA</sequence>
<gene>
    <name evidence="5" type="primary">mutT1</name>
    <name type="ordered locus">Rv2985</name>
</gene>
<feature type="chain" id="PRO_0000391775" description="8-oxo-(d)GTP phosphatase">
    <location>
        <begin position="1"/>
        <end position="317"/>
    </location>
</feature>
<feature type="domain" description="Nudix hydrolase" evidence="2">
    <location>
        <begin position="15"/>
        <end position="148"/>
    </location>
</feature>
<feature type="short sequence motif" description="Nudix box" evidence="2">
    <location>
        <begin position="54"/>
        <end position="75"/>
    </location>
</feature>
<feature type="binding site" evidence="1">
    <location>
        <begin position="43"/>
        <end position="46"/>
    </location>
    <ligand>
        <name>substrate</name>
    </ligand>
</feature>
<feature type="binding site" evidence="1">
    <location>
        <position position="48"/>
    </location>
    <ligand>
        <name>substrate</name>
    </ligand>
</feature>
<feature type="binding site" evidence="1">
    <location>
        <begin position="53"/>
        <end position="55"/>
    </location>
    <ligand>
        <name>substrate</name>
    </ligand>
</feature>
<feature type="binding site" evidence="1">
    <location>
        <position position="53"/>
    </location>
    <ligand>
        <name>Mg(2+)</name>
        <dbReference type="ChEBI" id="CHEBI:18420"/>
        <label>1</label>
    </ligand>
</feature>
<feature type="binding site" evidence="1">
    <location>
        <position position="69"/>
    </location>
    <ligand>
        <name>Mg(2+)</name>
        <dbReference type="ChEBI" id="CHEBI:18420"/>
        <label>2</label>
    </ligand>
</feature>
<feature type="binding site" evidence="1">
    <location>
        <position position="73"/>
    </location>
    <ligand>
        <name>Mg(2+)</name>
        <dbReference type="ChEBI" id="CHEBI:18420"/>
        <label>1</label>
    </ligand>
</feature>
<feature type="binding site" evidence="1">
    <location>
        <position position="73"/>
    </location>
    <ligand>
        <name>Mg(2+)</name>
        <dbReference type="ChEBI" id="CHEBI:18420"/>
        <label>2</label>
    </ligand>
</feature>
<feature type="binding site" evidence="1">
    <location>
        <position position="89"/>
    </location>
    <ligand>
        <name>substrate</name>
    </ligand>
</feature>
<feature type="binding site" evidence="1">
    <location>
        <position position="99"/>
    </location>
    <ligand>
        <name>substrate</name>
    </ligand>
</feature>
<feature type="binding site" evidence="1">
    <location>
        <position position="118"/>
    </location>
    <ligand>
        <name>Mg(2+)</name>
        <dbReference type="ChEBI" id="CHEBI:18420"/>
        <label>1</label>
    </ligand>
</feature>
<feature type="binding site" evidence="1">
    <location>
        <position position="118"/>
    </location>
    <ligand>
        <name>Mg(2+)</name>
        <dbReference type="ChEBI" id="CHEBI:18420"/>
        <label>2</label>
    </ligand>
</feature>
<feature type="binding site" evidence="1">
    <location>
        <position position="118"/>
    </location>
    <ligand>
        <name>substrate</name>
    </ligand>
</feature>
<feature type="binding site" evidence="1">
    <location>
        <position position="136"/>
    </location>
    <ligand>
        <name>substrate</name>
    </ligand>
</feature>
<accession>P9WIY3</accession>
<accession>L0TB80</accession>
<accession>P95110</accession>
<accession>Q7D6B2</accession>
<comment type="function">
    <text evidence="3 4">Catalyzes the conversion of 8-oxo-dGTP to 8-oxo-dGDP, and 8-oxo-GTP to 8-oxo-GDP (PubMed:16585780, PubMed:23463507). Functions in concert with Rv1700 to detoxify 8-oxo-dGTP to 8-oxo-dGMP and plays an important role in supporting cellular growth under oxidative stress (PubMed:23463507).</text>
</comment>
<comment type="catalytic activity">
    <reaction evidence="4">
        <text>8-oxo-dGTP + H2O = 8-oxo-dGDP + phosphate + H(+)</text>
        <dbReference type="Rhea" id="RHEA:59980"/>
        <dbReference type="ChEBI" id="CHEBI:15377"/>
        <dbReference type="ChEBI" id="CHEBI:15378"/>
        <dbReference type="ChEBI" id="CHEBI:43474"/>
        <dbReference type="ChEBI" id="CHEBI:63715"/>
        <dbReference type="ChEBI" id="CHEBI:77896"/>
        <dbReference type="EC" id="3.6.1.69"/>
    </reaction>
</comment>
<comment type="catalytic activity">
    <reaction evidence="4">
        <text>8-oxo-GTP + H2O = 8-oxo-GDP + phosphate + H(+)</text>
        <dbReference type="Rhea" id="RHEA:60032"/>
        <dbReference type="ChEBI" id="CHEBI:15377"/>
        <dbReference type="ChEBI" id="CHEBI:15378"/>
        <dbReference type="ChEBI" id="CHEBI:43474"/>
        <dbReference type="ChEBI" id="CHEBI:143553"/>
        <dbReference type="ChEBI" id="CHEBI:143554"/>
        <dbReference type="EC" id="3.6.1.69"/>
    </reaction>
</comment>
<comment type="cofactor">
    <cofactor evidence="1">
        <name>Mg(2+)</name>
        <dbReference type="ChEBI" id="CHEBI:18420"/>
    </cofactor>
</comment>
<comment type="biophysicochemical properties">
    <kinetics>
        <KM evidence="4">50 uM for 8-oxo-dGTP</KM>
        <Vmax evidence="4">0.88 pmol/min/ng enzyme with 8-oxo-dGTP as substrate</Vmax>
        <text evidence="4">kcat is 0.54 sec(-1) with 8-oxo-dGTP as substrate.</text>
    </kinetics>
</comment>
<comment type="disruption phenotype">
    <text evidence="3">15.5-fold spontaneous mutation frequency increase by rifampicin resistance screening.</text>
</comment>
<comment type="similarity">
    <text evidence="7">Belongs to the Nudix hydrolase family.</text>
</comment>
<proteinExistence type="evidence at protein level"/>
<organism>
    <name type="scientific">Mycobacterium tuberculosis (strain ATCC 25618 / H37Rv)</name>
    <dbReference type="NCBI Taxonomy" id="83332"/>
    <lineage>
        <taxon>Bacteria</taxon>
        <taxon>Bacillati</taxon>
        <taxon>Actinomycetota</taxon>
        <taxon>Actinomycetes</taxon>
        <taxon>Mycobacteriales</taxon>
        <taxon>Mycobacteriaceae</taxon>
        <taxon>Mycobacterium</taxon>
        <taxon>Mycobacterium tuberculosis complex</taxon>
    </lineage>
</organism>
<keyword id="KW-0227">DNA damage</keyword>
<keyword id="KW-0234">DNA repair</keyword>
<keyword id="KW-0235">DNA replication</keyword>
<keyword id="KW-0378">Hydrolase</keyword>
<keyword id="KW-0460">Magnesium</keyword>
<keyword id="KW-0479">Metal-binding</keyword>
<keyword id="KW-1185">Reference proteome</keyword>
<name>MUTT1_MYCTU</name>
<evidence type="ECO:0000250" key="1">
    <source>
        <dbReference type="UniProtKB" id="A0QUZ2"/>
    </source>
</evidence>
<evidence type="ECO:0000255" key="2">
    <source>
        <dbReference type="PROSITE-ProRule" id="PRU00794"/>
    </source>
</evidence>
<evidence type="ECO:0000269" key="3">
    <source>
    </source>
</evidence>
<evidence type="ECO:0000269" key="4">
    <source>
    </source>
</evidence>
<evidence type="ECO:0000303" key="5">
    <source>
    </source>
</evidence>
<evidence type="ECO:0000303" key="6">
    <source>
    </source>
</evidence>
<evidence type="ECO:0000305" key="7"/>
<protein>
    <recommendedName>
        <fullName evidence="7">8-oxo-(d)GTP phosphatase</fullName>
        <shortName evidence="7">8-oxo-(d)GTPase</shortName>
        <ecNumber evidence="4">3.6.1.69</ecNumber>
    </recommendedName>
    <alternativeName>
        <fullName evidence="6">MtuMutT1</fullName>
    </alternativeName>
    <alternativeName>
        <fullName>Mutator protein MutT1</fullName>
    </alternativeName>
</protein>